<name>SYE_PROMM</name>
<accession>Q7TUT7</accession>
<protein>
    <recommendedName>
        <fullName evidence="1">Glutamate--tRNA ligase</fullName>
        <ecNumber evidence="1">6.1.1.17</ecNumber>
    </recommendedName>
    <alternativeName>
        <fullName evidence="1">Glutamyl-tRNA synthetase</fullName>
        <shortName evidence="1">GluRS</shortName>
    </alternativeName>
</protein>
<comment type="function">
    <text evidence="1">Catalyzes the attachment of glutamate to tRNA(Glu) in a two-step reaction: glutamate is first activated by ATP to form Glu-AMP and then transferred to the acceptor end of tRNA(Glu).</text>
</comment>
<comment type="catalytic activity">
    <reaction evidence="1">
        <text>tRNA(Glu) + L-glutamate + ATP = L-glutamyl-tRNA(Glu) + AMP + diphosphate</text>
        <dbReference type="Rhea" id="RHEA:23540"/>
        <dbReference type="Rhea" id="RHEA-COMP:9663"/>
        <dbReference type="Rhea" id="RHEA-COMP:9680"/>
        <dbReference type="ChEBI" id="CHEBI:29985"/>
        <dbReference type="ChEBI" id="CHEBI:30616"/>
        <dbReference type="ChEBI" id="CHEBI:33019"/>
        <dbReference type="ChEBI" id="CHEBI:78442"/>
        <dbReference type="ChEBI" id="CHEBI:78520"/>
        <dbReference type="ChEBI" id="CHEBI:456215"/>
        <dbReference type="EC" id="6.1.1.17"/>
    </reaction>
</comment>
<comment type="subunit">
    <text evidence="1">Monomer.</text>
</comment>
<comment type="subcellular location">
    <subcellularLocation>
        <location evidence="1">Cytoplasm</location>
    </subcellularLocation>
</comment>
<comment type="similarity">
    <text evidence="1">Belongs to the class-I aminoacyl-tRNA synthetase family. Glutamate--tRNA ligase type 1 subfamily.</text>
</comment>
<proteinExistence type="inferred from homology"/>
<dbReference type="EC" id="6.1.1.17" evidence="1"/>
<dbReference type="EMBL" id="BX548175">
    <property type="protein sequence ID" value="CAE21483.1"/>
    <property type="molecule type" value="Genomic_DNA"/>
</dbReference>
<dbReference type="RefSeq" id="WP_011130676.1">
    <property type="nucleotide sequence ID" value="NC_005071.1"/>
</dbReference>
<dbReference type="SMR" id="Q7TUT7"/>
<dbReference type="KEGG" id="pmt:PMT_1308"/>
<dbReference type="eggNOG" id="COG0008">
    <property type="taxonomic scope" value="Bacteria"/>
</dbReference>
<dbReference type="HOGENOM" id="CLU_015768_6_0_3"/>
<dbReference type="OrthoDB" id="9807503at2"/>
<dbReference type="Proteomes" id="UP000001423">
    <property type="component" value="Chromosome"/>
</dbReference>
<dbReference type="GO" id="GO:0005829">
    <property type="term" value="C:cytosol"/>
    <property type="evidence" value="ECO:0007669"/>
    <property type="project" value="TreeGrafter"/>
</dbReference>
<dbReference type="GO" id="GO:0005524">
    <property type="term" value="F:ATP binding"/>
    <property type="evidence" value="ECO:0007669"/>
    <property type="project" value="UniProtKB-UniRule"/>
</dbReference>
<dbReference type="GO" id="GO:0004818">
    <property type="term" value="F:glutamate-tRNA ligase activity"/>
    <property type="evidence" value="ECO:0007669"/>
    <property type="project" value="UniProtKB-UniRule"/>
</dbReference>
<dbReference type="GO" id="GO:0000049">
    <property type="term" value="F:tRNA binding"/>
    <property type="evidence" value="ECO:0007669"/>
    <property type="project" value="InterPro"/>
</dbReference>
<dbReference type="GO" id="GO:0008270">
    <property type="term" value="F:zinc ion binding"/>
    <property type="evidence" value="ECO:0007669"/>
    <property type="project" value="InterPro"/>
</dbReference>
<dbReference type="GO" id="GO:0006424">
    <property type="term" value="P:glutamyl-tRNA aminoacylation"/>
    <property type="evidence" value="ECO:0007669"/>
    <property type="project" value="UniProtKB-UniRule"/>
</dbReference>
<dbReference type="CDD" id="cd00808">
    <property type="entry name" value="GluRS_core"/>
    <property type="match status" value="1"/>
</dbReference>
<dbReference type="FunFam" id="3.40.50.620:FF:000007">
    <property type="entry name" value="Glutamate--tRNA ligase"/>
    <property type="match status" value="1"/>
</dbReference>
<dbReference type="Gene3D" id="1.10.10.350">
    <property type="match status" value="1"/>
</dbReference>
<dbReference type="Gene3D" id="1.10.8.70">
    <property type="entry name" value="Glutamate-tRNA synthetase, class I, anticodon-binding domain 1"/>
    <property type="match status" value="1"/>
</dbReference>
<dbReference type="Gene3D" id="1.10.1160.10">
    <property type="entry name" value="Glutamyl-trna Synthetase, Domain 2"/>
    <property type="match status" value="1"/>
</dbReference>
<dbReference type="Gene3D" id="3.90.800.10">
    <property type="entry name" value="Glutamyl-tRNA Synthetase, Domain 3"/>
    <property type="match status" value="1"/>
</dbReference>
<dbReference type="Gene3D" id="3.40.50.620">
    <property type="entry name" value="HUPs"/>
    <property type="match status" value="1"/>
</dbReference>
<dbReference type="HAMAP" id="MF_00022">
    <property type="entry name" value="Glu_tRNA_synth_type1"/>
    <property type="match status" value="1"/>
</dbReference>
<dbReference type="InterPro" id="IPR045462">
    <property type="entry name" value="aa-tRNA-synth_I_cd-bd"/>
</dbReference>
<dbReference type="InterPro" id="IPR020751">
    <property type="entry name" value="aa-tRNA-synth_I_codon-bd_sub2"/>
</dbReference>
<dbReference type="InterPro" id="IPR001412">
    <property type="entry name" value="aa-tRNA-synth_I_CS"/>
</dbReference>
<dbReference type="InterPro" id="IPR008925">
    <property type="entry name" value="aa_tRNA-synth_I_cd-bd_sf"/>
</dbReference>
<dbReference type="InterPro" id="IPR004527">
    <property type="entry name" value="Glu-tRNA-ligase_bac/mito"/>
</dbReference>
<dbReference type="InterPro" id="IPR020752">
    <property type="entry name" value="Glu-tRNA-synth_I_codon-bd_sub1"/>
</dbReference>
<dbReference type="InterPro" id="IPR000924">
    <property type="entry name" value="Glu/Gln-tRNA-synth"/>
</dbReference>
<dbReference type="InterPro" id="IPR020058">
    <property type="entry name" value="Glu/Gln-tRNA-synth_Ib_cat-dom"/>
</dbReference>
<dbReference type="InterPro" id="IPR020061">
    <property type="entry name" value="Glu_tRNA_lig_a-bdl"/>
</dbReference>
<dbReference type="InterPro" id="IPR049940">
    <property type="entry name" value="GluQ/Sye"/>
</dbReference>
<dbReference type="InterPro" id="IPR033910">
    <property type="entry name" value="GluRS_core"/>
</dbReference>
<dbReference type="InterPro" id="IPR014729">
    <property type="entry name" value="Rossmann-like_a/b/a_fold"/>
</dbReference>
<dbReference type="NCBIfam" id="TIGR00464">
    <property type="entry name" value="gltX_bact"/>
    <property type="match status" value="1"/>
</dbReference>
<dbReference type="NCBIfam" id="NF004315">
    <property type="entry name" value="PRK05710.1-4"/>
    <property type="match status" value="1"/>
</dbReference>
<dbReference type="PANTHER" id="PTHR43311">
    <property type="entry name" value="GLUTAMATE--TRNA LIGASE"/>
    <property type="match status" value="1"/>
</dbReference>
<dbReference type="PANTHER" id="PTHR43311:SF2">
    <property type="entry name" value="GLUTAMATE--TRNA LIGASE, MITOCHONDRIAL-RELATED"/>
    <property type="match status" value="1"/>
</dbReference>
<dbReference type="Pfam" id="PF19269">
    <property type="entry name" value="Anticodon_2"/>
    <property type="match status" value="1"/>
</dbReference>
<dbReference type="Pfam" id="PF00749">
    <property type="entry name" value="tRNA-synt_1c"/>
    <property type="match status" value="1"/>
</dbReference>
<dbReference type="PRINTS" id="PR00987">
    <property type="entry name" value="TRNASYNTHGLU"/>
</dbReference>
<dbReference type="SUPFAM" id="SSF48163">
    <property type="entry name" value="An anticodon-binding domain of class I aminoacyl-tRNA synthetases"/>
    <property type="match status" value="1"/>
</dbReference>
<dbReference type="SUPFAM" id="SSF52374">
    <property type="entry name" value="Nucleotidylyl transferase"/>
    <property type="match status" value="1"/>
</dbReference>
<dbReference type="PROSITE" id="PS00178">
    <property type="entry name" value="AA_TRNA_LIGASE_I"/>
    <property type="match status" value="1"/>
</dbReference>
<feature type="chain" id="PRO_0000119625" description="Glutamate--tRNA ligase">
    <location>
        <begin position="1"/>
        <end position="476"/>
    </location>
</feature>
<feature type="short sequence motif" description="'HIGH' region" evidence="1">
    <location>
        <begin position="9"/>
        <end position="19"/>
    </location>
</feature>
<feature type="short sequence motif" description="'KMSKS' region" evidence="1">
    <location>
        <begin position="248"/>
        <end position="252"/>
    </location>
</feature>
<feature type="binding site" evidence="1">
    <location>
        <position position="251"/>
    </location>
    <ligand>
        <name>ATP</name>
        <dbReference type="ChEBI" id="CHEBI:30616"/>
    </ligand>
</feature>
<reference key="1">
    <citation type="journal article" date="2003" name="Nature">
        <title>Genome divergence in two Prochlorococcus ecotypes reflects oceanic niche differentiation.</title>
        <authorList>
            <person name="Rocap G."/>
            <person name="Larimer F.W."/>
            <person name="Lamerdin J.E."/>
            <person name="Malfatti S."/>
            <person name="Chain P."/>
            <person name="Ahlgren N.A."/>
            <person name="Arellano A."/>
            <person name="Coleman M."/>
            <person name="Hauser L."/>
            <person name="Hess W.R."/>
            <person name="Johnson Z.I."/>
            <person name="Land M.L."/>
            <person name="Lindell D."/>
            <person name="Post A.F."/>
            <person name="Regala W."/>
            <person name="Shah M."/>
            <person name="Shaw S.L."/>
            <person name="Steglich C."/>
            <person name="Sullivan M.B."/>
            <person name="Ting C.S."/>
            <person name="Tolonen A."/>
            <person name="Webb E.A."/>
            <person name="Zinser E.R."/>
            <person name="Chisholm S.W."/>
        </authorList>
    </citation>
    <scope>NUCLEOTIDE SEQUENCE [LARGE SCALE GENOMIC DNA]</scope>
    <source>
        <strain>MIT 9313</strain>
    </source>
</reference>
<keyword id="KW-0030">Aminoacyl-tRNA synthetase</keyword>
<keyword id="KW-0067">ATP-binding</keyword>
<keyword id="KW-0963">Cytoplasm</keyword>
<keyword id="KW-0436">Ligase</keyword>
<keyword id="KW-0547">Nucleotide-binding</keyword>
<keyword id="KW-0648">Protein biosynthesis</keyword>
<keyword id="KW-1185">Reference proteome</keyword>
<sequence>MKVRVRLAPSPTGTLHIGTARTAVFNWLFARHQGGQFLLRIEDTDKERSKPEFTTNILEGLKWLGLNWDEQPIIQSQHVDDHRAAIQKLLDRDLAYRCYASETELEAMRETQKAQGKAPRYDNRHRDLNPEQEAAFQSEGRTAVVRFRIDDDATISWKDLVRGPMHWKGSDLGGDMVISRRAPAKEIGDPLYNLVVVVDDAAMSISHVIRGEDHIANTAKQLLIYEALGLPIPQFAHTPLILNSEGRKLSKRDGVTSISDFQAMGYTAEAMANYMSLLGWSVPEGTDERFTLQQAATVFSFDRVNKAGAKFDWDKLNWLNSQVLHDLPKDQLLHELKPLWSKAGWALPEENWCLDLAELLGPSLTLLKDGVDQARPFFEEPTLQADGLEQLAVDGAKAGLSNLLDQLDRTSWDGFDVKQAQQLLTNAAQAANVKKGVIMKSLRAALLGRLQGPDLITTWGLLARIGQDLNRLRRCL</sequence>
<evidence type="ECO:0000255" key="1">
    <source>
        <dbReference type="HAMAP-Rule" id="MF_00022"/>
    </source>
</evidence>
<organism>
    <name type="scientific">Prochlorococcus marinus (strain MIT 9313)</name>
    <dbReference type="NCBI Taxonomy" id="74547"/>
    <lineage>
        <taxon>Bacteria</taxon>
        <taxon>Bacillati</taxon>
        <taxon>Cyanobacteriota</taxon>
        <taxon>Cyanophyceae</taxon>
        <taxon>Synechococcales</taxon>
        <taxon>Prochlorococcaceae</taxon>
        <taxon>Prochlorococcus</taxon>
    </lineage>
</organism>
<gene>
    <name evidence="1" type="primary">gltX</name>
    <name type="ordered locus">PMT_1308</name>
</gene>